<sequence>MKLTKEKKNDCLVGVSYIPPLNFFTLTFLFLLRIEKVHLSLSLSLSLSLRFYYFHNVCYPSLFLFFCFVIPFFYSVRFILLYLHILRSFYELNILLLYGAENSRRQSPPGYYVIR</sequence>
<proteinExistence type="uncertain"/>
<keyword id="KW-0472">Membrane</keyword>
<keyword id="KW-0812">Transmembrane</keyword>
<keyword id="KW-1133">Transmembrane helix</keyword>
<protein>
    <recommendedName>
        <fullName>Putative uncharacterized membrane protein YLR311C</fullName>
    </recommendedName>
</protein>
<name>YL311_YEAST</name>
<organism>
    <name type="scientific">Saccharomyces cerevisiae (strain ATCC 204508 / S288c)</name>
    <name type="common">Baker's yeast</name>
    <dbReference type="NCBI Taxonomy" id="559292"/>
    <lineage>
        <taxon>Eukaryota</taxon>
        <taxon>Fungi</taxon>
        <taxon>Dikarya</taxon>
        <taxon>Ascomycota</taxon>
        <taxon>Saccharomycotina</taxon>
        <taxon>Saccharomycetes</taxon>
        <taxon>Saccharomycetales</taxon>
        <taxon>Saccharomycetaceae</taxon>
        <taxon>Saccharomyces</taxon>
    </lineage>
</organism>
<dbReference type="EMBL" id="U20618">
    <property type="protein sequence ID" value="AAB64518.1"/>
    <property type="molecule type" value="Genomic_DNA"/>
</dbReference>
<dbReference type="PIR" id="S53390">
    <property type="entry name" value="S53390"/>
</dbReference>
<dbReference type="DIP" id="DIP-4963N"/>
<dbReference type="IntAct" id="Q06158">
    <property type="interactions" value="1"/>
</dbReference>
<dbReference type="PaxDb" id="4932-YLR311C"/>
<dbReference type="TopDownProteomics" id="Q06158"/>
<dbReference type="EnsemblFungi" id="YLR311C_mRNA">
    <property type="protein sequence ID" value="YLR311C"/>
    <property type="gene ID" value="YLR311C"/>
</dbReference>
<dbReference type="AGR" id="SGD:S000004302"/>
<dbReference type="SGD" id="S000004302">
    <property type="gene designation" value="YLR311C"/>
</dbReference>
<dbReference type="HOGENOM" id="CLU_2110842_0_0_1"/>
<dbReference type="GO" id="GO:0016020">
    <property type="term" value="C:membrane"/>
    <property type="evidence" value="ECO:0000255"/>
    <property type="project" value="SGD"/>
</dbReference>
<feature type="chain" id="PRO_0000262740" description="Putative uncharacterized membrane protein YLR311C">
    <location>
        <begin position="1"/>
        <end position="115"/>
    </location>
</feature>
<feature type="topological domain" description="Cytoplasmic" evidence="1">
    <location>
        <begin position="1"/>
        <end position="11"/>
    </location>
</feature>
<feature type="transmembrane region" description="Helical" evidence="1">
    <location>
        <begin position="12"/>
        <end position="32"/>
    </location>
</feature>
<feature type="topological domain" description="Extracellular" evidence="1">
    <location>
        <begin position="33"/>
        <end position="52"/>
    </location>
</feature>
<feature type="transmembrane region" description="Helical" evidence="1">
    <location>
        <begin position="53"/>
        <end position="73"/>
    </location>
</feature>
<feature type="topological domain" description="Cytoplasmic" evidence="1">
    <location>
        <begin position="74"/>
        <end position="78"/>
    </location>
</feature>
<feature type="transmembrane region" description="Helical" evidence="1">
    <location>
        <begin position="79"/>
        <end position="98"/>
    </location>
</feature>
<feature type="topological domain" description="Extracellular" evidence="1">
    <location>
        <begin position="99"/>
        <end position="115"/>
    </location>
</feature>
<reference key="1">
    <citation type="journal article" date="1997" name="Nature">
        <title>The nucleotide sequence of Saccharomyces cerevisiae chromosome XII.</title>
        <authorList>
            <person name="Johnston M."/>
            <person name="Hillier L.W."/>
            <person name="Riles L."/>
            <person name="Albermann K."/>
            <person name="Andre B."/>
            <person name="Ansorge W."/>
            <person name="Benes V."/>
            <person name="Brueckner M."/>
            <person name="Delius H."/>
            <person name="Dubois E."/>
            <person name="Duesterhoeft A."/>
            <person name="Entian K.-D."/>
            <person name="Floeth M."/>
            <person name="Goffeau A."/>
            <person name="Hebling U."/>
            <person name="Heumann K."/>
            <person name="Heuss-Neitzel D."/>
            <person name="Hilbert H."/>
            <person name="Hilger F."/>
            <person name="Kleine K."/>
            <person name="Koetter P."/>
            <person name="Louis E.J."/>
            <person name="Messenguy F."/>
            <person name="Mewes H.-W."/>
            <person name="Miosga T."/>
            <person name="Moestl D."/>
            <person name="Mueller-Auer S."/>
            <person name="Nentwich U."/>
            <person name="Obermaier B."/>
            <person name="Piravandi E."/>
            <person name="Pohl T.M."/>
            <person name="Portetelle D."/>
            <person name="Purnelle B."/>
            <person name="Rechmann S."/>
            <person name="Rieger M."/>
            <person name="Rinke M."/>
            <person name="Rose M."/>
            <person name="Scharfe M."/>
            <person name="Scherens B."/>
            <person name="Scholler P."/>
            <person name="Schwager C."/>
            <person name="Schwarz S."/>
            <person name="Underwood A.P."/>
            <person name="Urrestarazu L.A."/>
            <person name="Vandenbol M."/>
            <person name="Verhasselt P."/>
            <person name="Vierendeels F."/>
            <person name="Voet M."/>
            <person name="Volckaert G."/>
            <person name="Voss H."/>
            <person name="Wambutt R."/>
            <person name="Wedler E."/>
            <person name="Wedler H."/>
            <person name="Zimmermann F.K."/>
            <person name="Zollner A."/>
            <person name="Hani J."/>
            <person name="Hoheisel J.D."/>
        </authorList>
    </citation>
    <scope>NUCLEOTIDE SEQUENCE [LARGE SCALE GENOMIC DNA]</scope>
    <source>
        <strain>ATCC 204508 / S288c</strain>
    </source>
</reference>
<reference key="2">
    <citation type="journal article" date="2014" name="G3 (Bethesda)">
        <title>The reference genome sequence of Saccharomyces cerevisiae: Then and now.</title>
        <authorList>
            <person name="Engel S.R."/>
            <person name="Dietrich F.S."/>
            <person name="Fisk D.G."/>
            <person name="Binkley G."/>
            <person name="Balakrishnan R."/>
            <person name="Costanzo M.C."/>
            <person name="Dwight S.S."/>
            <person name="Hitz B.C."/>
            <person name="Karra K."/>
            <person name="Nash R.S."/>
            <person name="Weng S."/>
            <person name="Wong E.D."/>
            <person name="Lloyd P."/>
            <person name="Skrzypek M.S."/>
            <person name="Miyasato S.R."/>
            <person name="Simison M."/>
            <person name="Cherry J.M."/>
        </authorList>
    </citation>
    <scope>GENOME REANNOTATION</scope>
    <source>
        <strain>ATCC 204508 / S288c</strain>
    </source>
</reference>
<reference key="3">
    <citation type="journal article" date="2003" name="J. Biol. Chem.">
        <title>Topology models for 37 Saccharomyces cerevisiae membrane proteins based on C-terminal reporter fusions and predictions.</title>
        <authorList>
            <person name="Kim H."/>
            <person name="Melen K."/>
            <person name="von Heijne G."/>
        </authorList>
    </citation>
    <scope>TOPOLOGY</scope>
</reference>
<reference key="4">
    <citation type="journal article" date="2006" name="Proc. Natl. Acad. Sci. U.S.A.">
        <title>A global topology map of the Saccharomyces cerevisiae membrane proteome.</title>
        <authorList>
            <person name="Kim H."/>
            <person name="Melen K."/>
            <person name="Oesterberg M."/>
            <person name="von Heijne G."/>
        </authorList>
    </citation>
    <scope>TOPOLOGY [LARGE SCALE ANALYSIS]</scope>
    <source>
        <strain>ATCC 208353 / W303-1A</strain>
    </source>
</reference>
<accession>Q06158</accession>
<gene>
    <name type="ordered locus">YLR311C</name>
    <name type="ORF">L8543.10</name>
</gene>
<comment type="subcellular location">
    <subcellularLocation>
        <location>Membrane</location>
        <topology>Multi-pass membrane protein</topology>
    </subcellularLocation>
</comment>
<comment type="caution">
    <text evidence="2">Product of a dubious gene prediction unlikely to encode a functional protein. Because of that it is not part of the S.cerevisiae S288c complete/reference proteome set.</text>
</comment>
<evidence type="ECO:0000255" key="1"/>
<evidence type="ECO:0000305" key="2">
    <source>
    </source>
</evidence>